<evidence type="ECO:0000255" key="1">
    <source>
        <dbReference type="HAMAP-Rule" id="MF_01080"/>
    </source>
</evidence>
<sequence>MLGFLNLHKPTGMTSHDCVGKVRRICGLKRVGHGGTLDPLATGVLPIALGPATRLLHYLPDQKTYQATIQFGLTTTTDDLAGDILSEQSANHLAQEVVEKALPQFLGSIEQRPPAYSAIQVKGQRLYDLARQGKDVTAPLRQVEVFDIQILDWQGGEKSELQVEIACGPGTYIRSIARDLGEVLGTGATLAQLTRTLSCGFALADSLTFETLAEQVQAGTFSPLEPSFSLQQPILHLPPAEAQRFCWGQKLPQDCADGMMQVHDTSDRFLGMGEIIDGLLKPKVVLPAQ</sequence>
<feature type="chain" id="PRO_1000084539" description="tRNA pseudouridine synthase B">
    <location>
        <begin position="1"/>
        <end position="289"/>
    </location>
</feature>
<feature type="active site" description="Nucleophile" evidence="1">
    <location>
        <position position="38"/>
    </location>
</feature>
<organism>
    <name type="scientific">Acaryochloris marina (strain MBIC 11017)</name>
    <dbReference type="NCBI Taxonomy" id="329726"/>
    <lineage>
        <taxon>Bacteria</taxon>
        <taxon>Bacillati</taxon>
        <taxon>Cyanobacteriota</taxon>
        <taxon>Cyanophyceae</taxon>
        <taxon>Acaryochloridales</taxon>
        <taxon>Acaryochloridaceae</taxon>
        <taxon>Acaryochloris</taxon>
    </lineage>
</organism>
<proteinExistence type="inferred from homology"/>
<reference key="1">
    <citation type="journal article" date="2008" name="Proc. Natl. Acad. Sci. U.S.A.">
        <title>Niche adaptation and genome expansion in the chlorophyll d-producing cyanobacterium Acaryochloris marina.</title>
        <authorList>
            <person name="Swingley W.D."/>
            <person name="Chen M."/>
            <person name="Cheung P.C."/>
            <person name="Conrad A.L."/>
            <person name="Dejesa L.C."/>
            <person name="Hao J."/>
            <person name="Honchak B.M."/>
            <person name="Karbach L.E."/>
            <person name="Kurdoglu A."/>
            <person name="Lahiri S."/>
            <person name="Mastrian S.D."/>
            <person name="Miyashita H."/>
            <person name="Page L."/>
            <person name="Ramakrishna P."/>
            <person name="Satoh S."/>
            <person name="Sattley W.M."/>
            <person name="Shimada Y."/>
            <person name="Taylor H.L."/>
            <person name="Tomo T."/>
            <person name="Tsuchiya T."/>
            <person name="Wang Z.T."/>
            <person name="Raymond J."/>
            <person name="Mimuro M."/>
            <person name="Blankenship R.E."/>
            <person name="Touchman J.W."/>
        </authorList>
    </citation>
    <scope>NUCLEOTIDE SEQUENCE [LARGE SCALE GENOMIC DNA]</scope>
    <source>
        <strain>MBIC 11017</strain>
    </source>
</reference>
<dbReference type="EC" id="5.4.99.25" evidence="1"/>
<dbReference type="EMBL" id="CP000828">
    <property type="protein sequence ID" value="ABW28000.1"/>
    <property type="molecule type" value="Genomic_DNA"/>
</dbReference>
<dbReference type="RefSeq" id="WP_012163433.1">
    <property type="nucleotide sequence ID" value="NC_009925.1"/>
</dbReference>
<dbReference type="SMR" id="B0CCH1"/>
<dbReference type="STRING" id="329726.AM1_3004"/>
<dbReference type="KEGG" id="amr:AM1_3004"/>
<dbReference type="eggNOG" id="COG0130">
    <property type="taxonomic scope" value="Bacteria"/>
</dbReference>
<dbReference type="HOGENOM" id="CLU_032087_0_3_3"/>
<dbReference type="OrthoDB" id="9802309at2"/>
<dbReference type="Proteomes" id="UP000000268">
    <property type="component" value="Chromosome"/>
</dbReference>
<dbReference type="GO" id="GO:0003723">
    <property type="term" value="F:RNA binding"/>
    <property type="evidence" value="ECO:0007669"/>
    <property type="project" value="InterPro"/>
</dbReference>
<dbReference type="GO" id="GO:0160148">
    <property type="term" value="F:tRNA pseudouridine(55) synthase activity"/>
    <property type="evidence" value="ECO:0007669"/>
    <property type="project" value="UniProtKB-EC"/>
</dbReference>
<dbReference type="GO" id="GO:1990481">
    <property type="term" value="P:mRNA pseudouridine synthesis"/>
    <property type="evidence" value="ECO:0007669"/>
    <property type="project" value="TreeGrafter"/>
</dbReference>
<dbReference type="GO" id="GO:0031119">
    <property type="term" value="P:tRNA pseudouridine synthesis"/>
    <property type="evidence" value="ECO:0007669"/>
    <property type="project" value="UniProtKB-UniRule"/>
</dbReference>
<dbReference type="CDD" id="cd02573">
    <property type="entry name" value="PseudoU_synth_EcTruB"/>
    <property type="match status" value="1"/>
</dbReference>
<dbReference type="CDD" id="cd21152">
    <property type="entry name" value="PUA_TruB_bacterial"/>
    <property type="match status" value="1"/>
</dbReference>
<dbReference type="Gene3D" id="3.30.2350.10">
    <property type="entry name" value="Pseudouridine synthase"/>
    <property type="match status" value="1"/>
</dbReference>
<dbReference type="HAMAP" id="MF_01080">
    <property type="entry name" value="TruB_bact"/>
    <property type="match status" value="1"/>
</dbReference>
<dbReference type="InterPro" id="IPR020103">
    <property type="entry name" value="PsdUridine_synth_cat_dom_sf"/>
</dbReference>
<dbReference type="InterPro" id="IPR002501">
    <property type="entry name" value="PsdUridine_synth_N"/>
</dbReference>
<dbReference type="InterPro" id="IPR015947">
    <property type="entry name" value="PUA-like_sf"/>
</dbReference>
<dbReference type="InterPro" id="IPR014780">
    <property type="entry name" value="tRNA_psdUridine_synth_TruB"/>
</dbReference>
<dbReference type="InterPro" id="IPR015240">
    <property type="entry name" value="tRNA_sdUridine_synth_fam1_C"/>
</dbReference>
<dbReference type="InterPro" id="IPR032819">
    <property type="entry name" value="TruB_C"/>
</dbReference>
<dbReference type="NCBIfam" id="TIGR00431">
    <property type="entry name" value="TruB"/>
    <property type="match status" value="1"/>
</dbReference>
<dbReference type="PANTHER" id="PTHR13767:SF2">
    <property type="entry name" value="PSEUDOURIDYLATE SYNTHASE TRUB1"/>
    <property type="match status" value="1"/>
</dbReference>
<dbReference type="PANTHER" id="PTHR13767">
    <property type="entry name" value="TRNA-PSEUDOURIDINE SYNTHASE"/>
    <property type="match status" value="1"/>
</dbReference>
<dbReference type="Pfam" id="PF09157">
    <property type="entry name" value="TruB-C_2"/>
    <property type="match status" value="1"/>
</dbReference>
<dbReference type="Pfam" id="PF16198">
    <property type="entry name" value="TruB_C_2"/>
    <property type="match status" value="1"/>
</dbReference>
<dbReference type="Pfam" id="PF01509">
    <property type="entry name" value="TruB_N"/>
    <property type="match status" value="1"/>
</dbReference>
<dbReference type="SUPFAM" id="SSF55120">
    <property type="entry name" value="Pseudouridine synthase"/>
    <property type="match status" value="1"/>
</dbReference>
<dbReference type="SUPFAM" id="SSF88697">
    <property type="entry name" value="PUA domain-like"/>
    <property type="match status" value="1"/>
</dbReference>
<keyword id="KW-0413">Isomerase</keyword>
<keyword id="KW-1185">Reference proteome</keyword>
<keyword id="KW-0819">tRNA processing</keyword>
<comment type="function">
    <text evidence="1">Responsible for synthesis of pseudouridine from uracil-55 in the psi GC loop of transfer RNAs.</text>
</comment>
<comment type="catalytic activity">
    <reaction evidence="1">
        <text>uridine(55) in tRNA = pseudouridine(55) in tRNA</text>
        <dbReference type="Rhea" id="RHEA:42532"/>
        <dbReference type="Rhea" id="RHEA-COMP:10101"/>
        <dbReference type="Rhea" id="RHEA-COMP:10102"/>
        <dbReference type="ChEBI" id="CHEBI:65314"/>
        <dbReference type="ChEBI" id="CHEBI:65315"/>
        <dbReference type="EC" id="5.4.99.25"/>
    </reaction>
</comment>
<comment type="similarity">
    <text evidence="1">Belongs to the pseudouridine synthase TruB family. Type 1 subfamily.</text>
</comment>
<gene>
    <name evidence="1" type="primary">truB</name>
    <name type="ordered locus">AM1_3004</name>
</gene>
<accession>B0CCH1</accession>
<protein>
    <recommendedName>
        <fullName evidence="1">tRNA pseudouridine synthase B</fullName>
        <ecNumber evidence="1">5.4.99.25</ecNumber>
    </recommendedName>
    <alternativeName>
        <fullName evidence="1">tRNA pseudouridine(55) synthase</fullName>
        <shortName evidence="1">Psi55 synthase</shortName>
    </alternativeName>
    <alternativeName>
        <fullName evidence="1">tRNA pseudouridylate synthase</fullName>
    </alternativeName>
    <alternativeName>
        <fullName evidence="1">tRNA-uridine isomerase</fullName>
    </alternativeName>
</protein>
<name>TRUB_ACAM1</name>